<feature type="chain" id="PRO_1000022502" description="Chorismate synthase">
    <location>
        <begin position="1"/>
        <end position="361"/>
    </location>
</feature>
<feature type="binding site" evidence="1">
    <location>
        <position position="48"/>
    </location>
    <ligand>
        <name>NADP(+)</name>
        <dbReference type="ChEBI" id="CHEBI:58349"/>
    </ligand>
</feature>
<feature type="binding site" evidence="1">
    <location>
        <position position="54"/>
    </location>
    <ligand>
        <name>NADP(+)</name>
        <dbReference type="ChEBI" id="CHEBI:58349"/>
    </ligand>
</feature>
<feature type="binding site" evidence="1">
    <location>
        <begin position="125"/>
        <end position="127"/>
    </location>
    <ligand>
        <name>FMN</name>
        <dbReference type="ChEBI" id="CHEBI:58210"/>
    </ligand>
</feature>
<feature type="binding site" evidence="1">
    <location>
        <begin position="238"/>
        <end position="239"/>
    </location>
    <ligand>
        <name>FMN</name>
        <dbReference type="ChEBI" id="CHEBI:58210"/>
    </ligand>
</feature>
<feature type="binding site" evidence="1">
    <location>
        <position position="278"/>
    </location>
    <ligand>
        <name>FMN</name>
        <dbReference type="ChEBI" id="CHEBI:58210"/>
    </ligand>
</feature>
<feature type="binding site" evidence="1">
    <location>
        <begin position="293"/>
        <end position="297"/>
    </location>
    <ligand>
        <name>FMN</name>
        <dbReference type="ChEBI" id="CHEBI:58210"/>
    </ligand>
</feature>
<feature type="binding site" evidence="1">
    <location>
        <position position="319"/>
    </location>
    <ligand>
        <name>FMN</name>
        <dbReference type="ChEBI" id="CHEBI:58210"/>
    </ligand>
</feature>
<organism>
    <name type="scientific">Klebsiella pneumoniae subsp. pneumoniae (strain ATCC 700721 / MGH 78578)</name>
    <dbReference type="NCBI Taxonomy" id="272620"/>
    <lineage>
        <taxon>Bacteria</taxon>
        <taxon>Pseudomonadati</taxon>
        <taxon>Pseudomonadota</taxon>
        <taxon>Gammaproteobacteria</taxon>
        <taxon>Enterobacterales</taxon>
        <taxon>Enterobacteriaceae</taxon>
        <taxon>Klebsiella/Raoultella group</taxon>
        <taxon>Klebsiella</taxon>
        <taxon>Klebsiella pneumoniae complex</taxon>
    </lineage>
</organism>
<name>AROC_KLEP7</name>
<proteinExistence type="inferred from homology"/>
<keyword id="KW-0028">Amino-acid biosynthesis</keyword>
<keyword id="KW-0057">Aromatic amino acid biosynthesis</keyword>
<keyword id="KW-0274">FAD</keyword>
<keyword id="KW-0285">Flavoprotein</keyword>
<keyword id="KW-0288">FMN</keyword>
<keyword id="KW-0456">Lyase</keyword>
<keyword id="KW-0521">NADP</keyword>
<gene>
    <name evidence="1" type="primary">aroC</name>
    <name type="ordered locus">KPN78578_26750</name>
    <name type="ORF">KPN_02719</name>
</gene>
<protein>
    <recommendedName>
        <fullName evidence="1">Chorismate synthase</fullName>
        <shortName evidence="1">CS</shortName>
        <ecNumber evidence="1">4.2.3.5</ecNumber>
    </recommendedName>
    <alternativeName>
        <fullName evidence="1">5-enolpyruvylshikimate-3-phosphate phospholyase</fullName>
    </alternativeName>
</protein>
<comment type="function">
    <text evidence="1">Catalyzes the anti-1,4-elimination of the C-3 phosphate and the C-6 proR hydrogen from 5-enolpyruvylshikimate-3-phosphate (EPSP) to yield chorismate, which is the branch point compound that serves as the starting substrate for the three terminal pathways of aromatic amino acid biosynthesis. This reaction introduces a second double bond into the aromatic ring system.</text>
</comment>
<comment type="catalytic activity">
    <reaction evidence="1">
        <text>5-O-(1-carboxyvinyl)-3-phosphoshikimate = chorismate + phosphate</text>
        <dbReference type="Rhea" id="RHEA:21020"/>
        <dbReference type="ChEBI" id="CHEBI:29748"/>
        <dbReference type="ChEBI" id="CHEBI:43474"/>
        <dbReference type="ChEBI" id="CHEBI:57701"/>
        <dbReference type="EC" id="4.2.3.5"/>
    </reaction>
</comment>
<comment type="cofactor">
    <cofactor evidence="1">
        <name>FMNH2</name>
        <dbReference type="ChEBI" id="CHEBI:57618"/>
    </cofactor>
    <text evidence="1">Reduced FMN (FMNH(2)).</text>
</comment>
<comment type="pathway">
    <text evidence="1">Metabolic intermediate biosynthesis; chorismate biosynthesis; chorismate from D-erythrose 4-phosphate and phosphoenolpyruvate: step 7/7.</text>
</comment>
<comment type="subunit">
    <text evidence="1">Homotetramer.</text>
</comment>
<comment type="similarity">
    <text evidence="1">Belongs to the chorismate synthase family.</text>
</comment>
<evidence type="ECO:0000255" key="1">
    <source>
        <dbReference type="HAMAP-Rule" id="MF_00300"/>
    </source>
</evidence>
<dbReference type="EC" id="4.2.3.5" evidence="1"/>
<dbReference type="EMBL" id="CP000647">
    <property type="protein sequence ID" value="ABR78136.1"/>
    <property type="molecule type" value="Genomic_DNA"/>
</dbReference>
<dbReference type="RefSeq" id="WP_002913342.1">
    <property type="nucleotide sequence ID" value="NC_009648.1"/>
</dbReference>
<dbReference type="SMR" id="A6TC15"/>
<dbReference type="STRING" id="272620.KPN_02719"/>
<dbReference type="PaxDb" id="272620-KPN_02719"/>
<dbReference type="EnsemblBacteria" id="ABR78136">
    <property type="protein sequence ID" value="ABR78136"/>
    <property type="gene ID" value="KPN_02719"/>
</dbReference>
<dbReference type="KEGG" id="kpn:KPN_02719"/>
<dbReference type="HOGENOM" id="CLU_034547_0_2_6"/>
<dbReference type="UniPathway" id="UPA00053">
    <property type="reaction ID" value="UER00090"/>
</dbReference>
<dbReference type="Proteomes" id="UP000000265">
    <property type="component" value="Chromosome"/>
</dbReference>
<dbReference type="GO" id="GO:0005829">
    <property type="term" value="C:cytosol"/>
    <property type="evidence" value="ECO:0007669"/>
    <property type="project" value="TreeGrafter"/>
</dbReference>
<dbReference type="GO" id="GO:0004107">
    <property type="term" value="F:chorismate synthase activity"/>
    <property type="evidence" value="ECO:0007669"/>
    <property type="project" value="UniProtKB-UniRule"/>
</dbReference>
<dbReference type="GO" id="GO:0010181">
    <property type="term" value="F:FMN binding"/>
    <property type="evidence" value="ECO:0007669"/>
    <property type="project" value="TreeGrafter"/>
</dbReference>
<dbReference type="GO" id="GO:0008652">
    <property type="term" value="P:amino acid biosynthetic process"/>
    <property type="evidence" value="ECO:0007669"/>
    <property type="project" value="UniProtKB-KW"/>
</dbReference>
<dbReference type="GO" id="GO:0009073">
    <property type="term" value="P:aromatic amino acid family biosynthetic process"/>
    <property type="evidence" value="ECO:0007669"/>
    <property type="project" value="UniProtKB-KW"/>
</dbReference>
<dbReference type="GO" id="GO:0009423">
    <property type="term" value="P:chorismate biosynthetic process"/>
    <property type="evidence" value="ECO:0007669"/>
    <property type="project" value="UniProtKB-UniRule"/>
</dbReference>
<dbReference type="CDD" id="cd07304">
    <property type="entry name" value="Chorismate_synthase"/>
    <property type="match status" value="1"/>
</dbReference>
<dbReference type="FunFam" id="3.60.150.10:FF:000001">
    <property type="entry name" value="Chorismate synthase"/>
    <property type="match status" value="1"/>
</dbReference>
<dbReference type="Gene3D" id="3.60.150.10">
    <property type="entry name" value="Chorismate synthase AroC"/>
    <property type="match status" value="1"/>
</dbReference>
<dbReference type="HAMAP" id="MF_00300">
    <property type="entry name" value="Chorismate_synth"/>
    <property type="match status" value="1"/>
</dbReference>
<dbReference type="InterPro" id="IPR000453">
    <property type="entry name" value="Chorismate_synth"/>
</dbReference>
<dbReference type="InterPro" id="IPR035904">
    <property type="entry name" value="Chorismate_synth_AroC_sf"/>
</dbReference>
<dbReference type="InterPro" id="IPR020541">
    <property type="entry name" value="Chorismate_synthase_CS"/>
</dbReference>
<dbReference type="NCBIfam" id="TIGR00033">
    <property type="entry name" value="aroC"/>
    <property type="match status" value="1"/>
</dbReference>
<dbReference type="NCBIfam" id="NF003793">
    <property type="entry name" value="PRK05382.1"/>
    <property type="match status" value="1"/>
</dbReference>
<dbReference type="PANTHER" id="PTHR21085">
    <property type="entry name" value="CHORISMATE SYNTHASE"/>
    <property type="match status" value="1"/>
</dbReference>
<dbReference type="PANTHER" id="PTHR21085:SF0">
    <property type="entry name" value="CHORISMATE SYNTHASE"/>
    <property type="match status" value="1"/>
</dbReference>
<dbReference type="Pfam" id="PF01264">
    <property type="entry name" value="Chorismate_synt"/>
    <property type="match status" value="1"/>
</dbReference>
<dbReference type="PIRSF" id="PIRSF001456">
    <property type="entry name" value="Chorismate_synth"/>
    <property type="match status" value="1"/>
</dbReference>
<dbReference type="SUPFAM" id="SSF103263">
    <property type="entry name" value="Chorismate synthase, AroC"/>
    <property type="match status" value="1"/>
</dbReference>
<dbReference type="PROSITE" id="PS00787">
    <property type="entry name" value="CHORISMATE_SYNTHASE_1"/>
    <property type="match status" value="1"/>
</dbReference>
<dbReference type="PROSITE" id="PS00788">
    <property type="entry name" value="CHORISMATE_SYNTHASE_2"/>
    <property type="match status" value="1"/>
</dbReference>
<dbReference type="PROSITE" id="PS00789">
    <property type="entry name" value="CHORISMATE_SYNTHASE_3"/>
    <property type="match status" value="1"/>
</dbReference>
<reference key="1">
    <citation type="submission" date="2006-09" db="EMBL/GenBank/DDBJ databases">
        <authorList>
            <consortium name="The Klebsiella pneumonia Genome Sequencing Project"/>
            <person name="McClelland M."/>
            <person name="Sanderson E.K."/>
            <person name="Spieth J."/>
            <person name="Clifton W.S."/>
            <person name="Latreille P."/>
            <person name="Sabo A."/>
            <person name="Pepin K."/>
            <person name="Bhonagiri V."/>
            <person name="Porwollik S."/>
            <person name="Ali J."/>
            <person name="Wilson R.K."/>
        </authorList>
    </citation>
    <scope>NUCLEOTIDE SEQUENCE [LARGE SCALE GENOMIC DNA]</scope>
    <source>
        <strain>ATCC 700721 / MGH 78578</strain>
    </source>
</reference>
<accession>A6TC15</accession>
<sequence>MAGNTIGQLFRVTTFGESHGLALGCIVDGVPPGIPLTEADLQHDLDRRRPGTSRYTTQRREPDQVKILSGVFEGVTTGTSIGLLIENTDQRSQDYGAIKDLFRPGHADYTYEQKYGLRDYRGGGRSSARETAMRVAAGAIAKKYLAAKFGIVIRGCLTQMGDIPLAIKDWDQVEQNPFFCPDPDKIDALDELMRGLKKEGDSIGAKVTVVADGVPPGLGEPVFDRLDADIAHALMSINAVKGVEIGDGFEVVKLRGSENRDEITKAGFQSNHAGGILGGISSGQQIVANIALKPTSSITVPGHTINRFGEEVEMITKGRHDPCVGIRAVPIAEAMLAIVLMDHFMRQRAQNGDVTTTIPRW</sequence>